<evidence type="ECO:0000255" key="1">
    <source>
        <dbReference type="HAMAP-Rule" id="MF_01382"/>
    </source>
</evidence>
<dbReference type="EC" id="7.4.2.8" evidence="1"/>
<dbReference type="EMBL" id="AM946015">
    <property type="protein sequence ID" value="CAR43291.1"/>
    <property type="molecule type" value="Genomic_DNA"/>
</dbReference>
<dbReference type="RefSeq" id="WP_015911845.1">
    <property type="nucleotide sequence ID" value="NC_012004.1"/>
</dbReference>
<dbReference type="SMR" id="B9DVI5"/>
<dbReference type="STRING" id="218495.SUB1537"/>
<dbReference type="KEGG" id="sub:SUB1537"/>
<dbReference type="eggNOG" id="COG0653">
    <property type="taxonomic scope" value="Bacteria"/>
</dbReference>
<dbReference type="HOGENOM" id="CLU_005314_3_0_9"/>
<dbReference type="OrthoDB" id="9805579at2"/>
<dbReference type="Proteomes" id="UP000000449">
    <property type="component" value="Chromosome"/>
</dbReference>
<dbReference type="GO" id="GO:0031522">
    <property type="term" value="C:cell envelope Sec protein transport complex"/>
    <property type="evidence" value="ECO:0007669"/>
    <property type="project" value="TreeGrafter"/>
</dbReference>
<dbReference type="GO" id="GO:0005829">
    <property type="term" value="C:cytosol"/>
    <property type="evidence" value="ECO:0007669"/>
    <property type="project" value="TreeGrafter"/>
</dbReference>
<dbReference type="GO" id="GO:0005886">
    <property type="term" value="C:plasma membrane"/>
    <property type="evidence" value="ECO:0007669"/>
    <property type="project" value="UniProtKB-SubCell"/>
</dbReference>
<dbReference type="GO" id="GO:0005524">
    <property type="term" value="F:ATP binding"/>
    <property type="evidence" value="ECO:0007669"/>
    <property type="project" value="UniProtKB-UniRule"/>
</dbReference>
<dbReference type="GO" id="GO:0046872">
    <property type="term" value="F:metal ion binding"/>
    <property type="evidence" value="ECO:0007669"/>
    <property type="project" value="UniProtKB-KW"/>
</dbReference>
<dbReference type="GO" id="GO:0008564">
    <property type="term" value="F:protein-exporting ATPase activity"/>
    <property type="evidence" value="ECO:0007669"/>
    <property type="project" value="UniProtKB-EC"/>
</dbReference>
<dbReference type="GO" id="GO:0065002">
    <property type="term" value="P:intracellular protein transmembrane transport"/>
    <property type="evidence" value="ECO:0007669"/>
    <property type="project" value="UniProtKB-UniRule"/>
</dbReference>
<dbReference type="GO" id="GO:0017038">
    <property type="term" value="P:protein import"/>
    <property type="evidence" value="ECO:0007669"/>
    <property type="project" value="InterPro"/>
</dbReference>
<dbReference type="GO" id="GO:0006605">
    <property type="term" value="P:protein targeting"/>
    <property type="evidence" value="ECO:0007669"/>
    <property type="project" value="UniProtKB-UniRule"/>
</dbReference>
<dbReference type="GO" id="GO:0043952">
    <property type="term" value="P:protein transport by the Sec complex"/>
    <property type="evidence" value="ECO:0007669"/>
    <property type="project" value="TreeGrafter"/>
</dbReference>
<dbReference type="CDD" id="cd17928">
    <property type="entry name" value="DEXDc_SecA"/>
    <property type="match status" value="1"/>
</dbReference>
<dbReference type="CDD" id="cd18803">
    <property type="entry name" value="SF2_C_secA"/>
    <property type="match status" value="1"/>
</dbReference>
<dbReference type="FunFam" id="1.10.3060.10:FF:000002">
    <property type="entry name" value="Preprotein translocase subunit SecA"/>
    <property type="match status" value="1"/>
</dbReference>
<dbReference type="FunFam" id="3.40.50.300:FF:000429">
    <property type="entry name" value="Preprotein translocase subunit SecA"/>
    <property type="match status" value="1"/>
</dbReference>
<dbReference type="FunFam" id="3.90.1440.10:FF:000001">
    <property type="entry name" value="Preprotein translocase subunit SecA"/>
    <property type="match status" value="1"/>
</dbReference>
<dbReference type="Gene3D" id="1.10.3060.10">
    <property type="entry name" value="Helical scaffold and wing domains of SecA"/>
    <property type="match status" value="1"/>
</dbReference>
<dbReference type="Gene3D" id="3.40.50.300">
    <property type="entry name" value="P-loop containing nucleotide triphosphate hydrolases"/>
    <property type="match status" value="3"/>
</dbReference>
<dbReference type="Gene3D" id="3.90.1440.10">
    <property type="entry name" value="SecA, preprotein cross-linking domain"/>
    <property type="match status" value="1"/>
</dbReference>
<dbReference type="HAMAP" id="MF_01382">
    <property type="entry name" value="SecA"/>
    <property type="match status" value="1"/>
</dbReference>
<dbReference type="InterPro" id="IPR014001">
    <property type="entry name" value="Helicase_ATP-bd"/>
</dbReference>
<dbReference type="InterPro" id="IPR001650">
    <property type="entry name" value="Helicase_C-like"/>
</dbReference>
<dbReference type="InterPro" id="IPR027417">
    <property type="entry name" value="P-loop_NTPase"/>
</dbReference>
<dbReference type="InterPro" id="IPR004027">
    <property type="entry name" value="SEC_C_motif"/>
</dbReference>
<dbReference type="InterPro" id="IPR000185">
    <property type="entry name" value="SecA"/>
</dbReference>
<dbReference type="InterPro" id="IPR020937">
    <property type="entry name" value="SecA_CS"/>
</dbReference>
<dbReference type="InterPro" id="IPR011115">
    <property type="entry name" value="SecA_DEAD"/>
</dbReference>
<dbReference type="InterPro" id="IPR014018">
    <property type="entry name" value="SecA_motor_DEAD"/>
</dbReference>
<dbReference type="InterPro" id="IPR011130">
    <property type="entry name" value="SecA_preprotein_X-link_dom"/>
</dbReference>
<dbReference type="InterPro" id="IPR044722">
    <property type="entry name" value="SecA_SF2_C"/>
</dbReference>
<dbReference type="InterPro" id="IPR011116">
    <property type="entry name" value="SecA_Wing/Scaffold"/>
</dbReference>
<dbReference type="InterPro" id="IPR036266">
    <property type="entry name" value="SecA_Wing/Scaffold_sf"/>
</dbReference>
<dbReference type="InterPro" id="IPR036670">
    <property type="entry name" value="SecA_X-link_sf"/>
</dbReference>
<dbReference type="NCBIfam" id="NF006630">
    <property type="entry name" value="PRK09200.1"/>
    <property type="match status" value="1"/>
</dbReference>
<dbReference type="NCBIfam" id="TIGR00963">
    <property type="entry name" value="secA"/>
    <property type="match status" value="1"/>
</dbReference>
<dbReference type="PANTHER" id="PTHR30612:SF0">
    <property type="entry name" value="CHLOROPLAST PROTEIN-TRANSPORTING ATPASE"/>
    <property type="match status" value="1"/>
</dbReference>
<dbReference type="PANTHER" id="PTHR30612">
    <property type="entry name" value="SECA INNER MEMBRANE COMPONENT OF SEC PROTEIN SECRETION SYSTEM"/>
    <property type="match status" value="1"/>
</dbReference>
<dbReference type="Pfam" id="PF21090">
    <property type="entry name" value="P-loop_SecA"/>
    <property type="match status" value="1"/>
</dbReference>
<dbReference type="Pfam" id="PF02810">
    <property type="entry name" value="SEC-C"/>
    <property type="match status" value="1"/>
</dbReference>
<dbReference type="Pfam" id="PF07517">
    <property type="entry name" value="SecA_DEAD"/>
    <property type="match status" value="1"/>
</dbReference>
<dbReference type="Pfam" id="PF01043">
    <property type="entry name" value="SecA_PP_bind"/>
    <property type="match status" value="1"/>
</dbReference>
<dbReference type="Pfam" id="PF07516">
    <property type="entry name" value="SecA_SW"/>
    <property type="match status" value="1"/>
</dbReference>
<dbReference type="PRINTS" id="PR00906">
    <property type="entry name" value="SECA"/>
</dbReference>
<dbReference type="SMART" id="SM00957">
    <property type="entry name" value="SecA_DEAD"/>
    <property type="match status" value="1"/>
</dbReference>
<dbReference type="SMART" id="SM00958">
    <property type="entry name" value="SecA_PP_bind"/>
    <property type="match status" value="1"/>
</dbReference>
<dbReference type="SUPFAM" id="SSF81886">
    <property type="entry name" value="Helical scaffold and wing domains of SecA"/>
    <property type="match status" value="1"/>
</dbReference>
<dbReference type="SUPFAM" id="SSF52540">
    <property type="entry name" value="P-loop containing nucleoside triphosphate hydrolases"/>
    <property type="match status" value="2"/>
</dbReference>
<dbReference type="SUPFAM" id="SSF81767">
    <property type="entry name" value="Pre-protein crosslinking domain of SecA"/>
    <property type="match status" value="1"/>
</dbReference>
<dbReference type="PROSITE" id="PS01312">
    <property type="entry name" value="SECA"/>
    <property type="match status" value="1"/>
</dbReference>
<dbReference type="PROSITE" id="PS51196">
    <property type="entry name" value="SECA_MOTOR_DEAD"/>
    <property type="match status" value="1"/>
</dbReference>
<gene>
    <name evidence="1" type="primary">secA</name>
    <name type="ordered locus">SUB1537</name>
</gene>
<feature type="chain" id="PRO_1000184247" description="Protein translocase subunit SecA">
    <location>
        <begin position="1"/>
        <end position="842"/>
    </location>
</feature>
<feature type="binding site" evidence="1">
    <location>
        <position position="85"/>
    </location>
    <ligand>
        <name>ATP</name>
        <dbReference type="ChEBI" id="CHEBI:30616"/>
    </ligand>
</feature>
<feature type="binding site" evidence="1">
    <location>
        <begin position="103"/>
        <end position="107"/>
    </location>
    <ligand>
        <name>ATP</name>
        <dbReference type="ChEBI" id="CHEBI:30616"/>
    </ligand>
</feature>
<feature type="binding site" evidence="1">
    <location>
        <position position="493"/>
    </location>
    <ligand>
        <name>ATP</name>
        <dbReference type="ChEBI" id="CHEBI:30616"/>
    </ligand>
</feature>
<feature type="binding site" evidence="1">
    <location>
        <position position="825"/>
    </location>
    <ligand>
        <name>Zn(2+)</name>
        <dbReference type="ChEBI" id="CHEBI:29105"/>
    </ligand>
</feature>
<feature type="binding site" evidence="1">
    <location>
        <position position="827"/>
    </location>
    <ligand>
        <name>Zn(2+)</name>
        <dbReference type="ChEBI" id="CHEBI:29105"/>
    </ligand>
</feature>
<feature type="binding site" evidence="1">
    <location>
        <position position="836"/>
    </location>
    <ligand>
        <name>Zn(2+)</name>
        <dbReference type="ChEBI" id="CHEBI:29105"/>
    </ligand>
</feature>
<feature type="binding site" evidence="1">
    <location>
        <position position="837"/>
    </location>
    <ligand>
        <name>Zn(2+)</name>
        <dbReference type="ChEBI" id="CHEBI:29105"/>
    </ligand>
</feature>
<keyword id="KW-0067">ATP-binding</keyword>
<keyword id="KW-1003">Cell membrane</keyword>
<keyword id="KW-0963">Cytoplasm</keyword>
<keyword id="KW-0472">Membrane</keyword>
<keyword id="KW-0479">Metal-binding</keyword>
<keyword id="KW-0547">Nucleotide-binding</keyword>
<keyword id="KW-0653">Protein transport</keyword>
<keyword id="KW-1185">Reference proteome</keyword>
<keyword id="KW-1278">Translocase</keyword>
<keyword id="KW-0811">Translocation</keyword>
<keyword id="KW-0813">Transport</keyword>
<keyword id="KW-0862">Zinc</keyword>
<sequence>MANILRKVIENDKGEIRKLEKIAKKVEAYADEMEALTDQELQAKTPEFKKRYQAGETLEDLLPEAFAVVREASRRVLGLYPYRVQIMGGVVLHNGDVPEMRTGEGKTLTATMPVYLNALAGEGVHVITVNEYLSTRDATEMGEVYSWLGLSVGINLAAKSPAEKREAYLCDITYSTNSEVGFDYLRDNMVVRQEDMVQRPLNFALVDEVDSVLIDEARTPLIVSGAVSSETNQLYVRADMFVKTLKEDDYIIDVPTKTIGLSDLGIDKAESYFNLNNLYDIDNVALTHFIDNALRANYIMLLDIDYVVSEDGEILIVDQFTGRTMEGRRFSDGLHQAIEAKEGVRIQEESKTSASITYQNMFRMYKKLAGMTGTAKTEEEEFREVYNMRIIPIPTNKPVARLDHTDLLYPTLASKFRAVIADVKARHEKGQPVLVGTVAVETSDYISKQLVAAGVPHEVLNAKNHFKEAQIIMNAGQRGAVTIATNMAGRGTDIKLGEGVRELGGLCVIGTERHESRRIDNQLRGRAGRQGDPGESQFYLSLEDDLMRRFGSDRIKAFLDRMRLEEEDAVIKSGMLARQVESAQKRVEGNNYDTRKQVLQYDDVMREQREIIYANRRDVITANRDLGPEIKAMIKRTIKRTVDAHARSNRNDAIDAIVAFARTNIVPEESISAKDLRSLKDDQIKEELYKRALAIYESQISKLHDQEAVLEFQKVLILMIVDNKWTEHIDALDQLRNSVGLRGYAQNNPVVEYQSEGFKMFQDMIGAIEFDVTRTMMKAQIHEQERERVSPNARTTAAQNIAAQSNQSSESSTQDYSHVKRNDLCPCGSGKKFKNCHGRKAF</sequence>
<protein>
    <recommendedName>
        <fullName evidence="1">Protein translocase subunit SecA</fullName>
        <ecNumber evidence="1">7.4.2.8</ecNumber>
    </recommendedName>
</protein>
<reference key="1">
    <citation type="journal article" date="2009" name="BMC Genomics">
        <title>Evidence for niche adaptation in the genome of the bovine pathogen Streptococcus uberis.</title>
        <authorList>
            <person name="Ward P.N."/>
            <person name="Holden M.T.G."/>
            <person name="Leigh J.A."/>
            <person name="Lennard N."/>
            <person name="Bignell A."/>
            <person name="Barron A."/>
            <person name="Clark L."/>
            <person name="Quail M.A."/>
            <person name="Woodward J."/>
            <person name="Barrell B.G."/>
            <person name="Egan S.A."/>
            <person name="Field T.R."/>
            <person name="Maskell D."/>
            <person name="Kehoe M."/>
            <person name="Dowson C.G."/>
            <person name="Chanter N."/>
            <person name="Whatmore A.M."/>
            <person name="Bentley S.D."/>
            <person name="Parkhill J."/>
        </authorList>
    </citation>
    <scope>NUCLEOTIDE SEQUENCE [LARGE SCALE GENOMIC DNA]</scope>
    <source>
        <strain>ATCC BAA-854 / 0140J</strain>
    </source>
</reference>
<accession>B9DVI5</accession>
<proteinExistence type="inferred from homology"/>
<comment type="function">
    <text evidence="1">Part of the Sec protein translocase complex. Interacts with the SecYEG preprotein conducting channel. Has a central role in coupling the hydrolysis of ATP to the transfer of proteins into and across the cell membrane, serving as an ATP-driven molecular motor driving the stepwise translocation of polypeptide chains across the membrane.</text>
</comment>
<comment type="catalytic activity">
    <reaction evidence="1">
        <text>ATP + H2O + cellular proteinSide 1 = ADP + phosphate + cellular proteinSide 2.</text>
        <dbReference type="EC" id="7.4.2.8"/>
    </reaction>
</comment>
<comment type="cofactor">
    <cofactor evidence="1">
        <name>Zn(2+)</name>
        <dbReference type="ChEBI" id="CHEBI:29105"/>
    </cofactor>
    <text evidence="1">May bind 1 zinc ion per subunit.</text>
</comment>
<comment type="subunit">
    <text evidence="1">Monomer and homodimer. Part of the essential Sec protein translocation apparatus which comprises SecA, SecYEG and auxiliary proteins SecDF. Other proteins may also be involved.</text>
</comment>
<comment type="subcellular location">
    <subcellularLocation>
        <location evidence="1">Cell membrane</location>
        <topology evidence="1">Peripheral membrane protein</topology>
        <orientation evidence="1">Cytoplasmic side</orientation>
    </subcellularLocation>
    <subcellularLocation>
        <location evidence="1">Cytoplasm</location>
    </subcellularLocation>
    <text evidence="1">Distribution is 50-50.</text>
</comment>
<comment type="similarity">
    <text evidence="1">Belongs to the SecA family.</text>
</comment>
<name>SECA_STRU0</name>
<organism>
    <name type="scientific">Streptococcus uberis (strain ATCC BAA-854 / 0140J)</name>
    <dbReference type="NCBI Taxonomy" id="218495"/>
    <lineage>
        <taxon>Bacteria</taxon>
        <taxon>Bacillati</taxon>
        <taxon>Bacillota</taxon>
        <taxon>Bacilli</taxon>
        <taxon>Lactobacillales</taxon>
        <taxon>Streptococcaceae</taxon>
        <taxon>Streptococcus</taxon>
    </lineage>
</organism>